<dbReference type="EMBL" id="AJ312282">
    <property type="protein sequence ID" value="CAC41644.1"/>
    <property type="molecule type" value="mRNA"/>
</dbReference>
<dbReference type="EMBL" id="AE014296">
    <property type="protein sequence ID" value="AAF49448.3"/>
    <property type="molecule type" value="Genomic_DNA"/>
</dbReference>
<dbReference type="EMBL" id="AY075582">
    <property type="protein sequence ID" value="AAL68387.1"/>
    <property type="molecule type" value="mRNA"/>
</dbReference>
<dbReference type="RefSeq" id="NP_524111.3">
    <property type="nucleotide sequence ID" value="NM_079387.6"/>
</dbReference>
<dbReference type="RefSeq" id="NP_730179.2">
    <property type="nucleotide sequence ID" value="NM_168674.4"/>
</dbReference>
<dbReference type="PDB" id="6IEW">
    <property type="method" value="X-ray"/>
    <property type="resolution" value="1.50 A"/>
    <property type="chains" value="A=789-841"/>
</dbReference>
<dbReference type="PDB" id="6MRK">
    <property type="method" value="X-ray"/>
    <property type="resolution" value="2.80 A"/>
    <property type="chains" value="A/B=573-777"/>
</dbReference>
<dbReference type="PDB" id="6OPF">
    <property type="method" value="X-ray"/>
    <property type="resolution" value="2.00 A"/>
    <property type="chains" value="A/B/D/F=781-841"/>
</dbReference>
<dbReference type="PDBsum" id="6IEW"/>
<dbReference type="PDBsum" id="6MRK"/>
<dbReference type="PDBsum" id="6OPF"/>
<dbReference type="SMR" id="Q9VV73"/>
<dbReference type="BioGRID" id="65146">
    <property type="interactions" value="17"/>
</dbReference>
<dbReference type="ComplexPortal" id="CPX-8934">
    <property type="entry name" value="Panoramix-induced co-transcriptional silencing complex"/>
</dbReference>
<dbReference type="FunCoup" id="Q9VV73">
    <property type="interactions" value="57"/>
</dbReference>
<dbReference type="IntAct" id="Q9VV73">
    <property type="interactions" value="4"/>
</dbReference>
<dbReference type="STRING" id="7227.FBpp0088483"/>
<dbReference type="PaxDb" id="7227-FBpp0088483"/>
<dbReference type="EnsemblMetazoa" id="FBtr0089478">
    <property type="protein sequence ID" value="FBpp0088483"/>
    <property type="gene ID" value="FBgn0036640"/>
</dbReference>
<dbReference type="EnsemblMetazoa" id="FBtr0089479">
    <property type="protein sequence ID" value="FBpp0088484"/>
    <property type="gene ID" value="FBgn0036640"/>
</dbReference>
<dbReference type="GeneID" id="39843"/>
<dbReference type="KEGG" id="dme:Dmel_CG4118"/>
<dbReference type="AGR" id="FB:FBgn0036640"/>
<dbReference type="CTD" id="56001"/>
<dbReference type="FlyBase" id="FBgn0036640">
    <property type="gene designation" value="nxf2"/>
</dbReference>
<dbReference type="VEuPathDB" id="VectorBase:FBgn0036640"/>
<dbReference type="eggNOG" id="KOG3763">
    <property type="taxonomic scope" value="Eukaryota"/>
</dbReference>
<dbReference type="GeneTree" id="ENSGT00390000007539"/>
<dbReference type="HOGENOM" id="CLU_016827_0_0_1"/>
<dbReference type="InParanoid" id="Q9VV73"/>
<dbReference type="OMA" id="ERFNIMN"/>
<dbReference type="OrthoDB" id="25872at2759"/>
<dbReference type="PhylomeDB" id="Q9VV73"/>
<dbReference type="Reactome" id="R-DME-159236">
    <property type="pathway name" value="Transport of Mature mRNA derived from an Intron-Containing Transcript"/>
</dbReference>
<dbReference type="SignaLink" id="Q9VV73"/>
<dbReference type="BioGRID-ORCS" id="39843">
    <property type="hits" value="0 hits in 3 CRISPR screens"/>
</dbReference>
<dbReference type="GenomeRNAi" id="39843"/>
<dbReference type="PRO" id="PR:Q9VV73"/>
<dbReference type="Proteomes" id="UP000000803">
    <property type="component" value="Chromosome 3L"/>
</dbReference>
<dbReference type="Bgee" id="FBgn0036640">
    <property type="expression patterns" value="Expressed in spermatocyte in testis and 57 other cell types or tissues"/>
</dbReference>
<dbReference type="ExpressionAtlas" id="Q9VV73">
    <property type="expression patterns" value="baseline and differential"/>
</dbReference>
<dbReference type="GO" id="GO:0005737">
    <property type="term" value="C:cytoplasm"/>
    <property type="evidence" value="ECO:0000314"/>
    <property type="project" value="FlyBase"/>
</dbReference>
<dbReference type="GO" id="GO:0005654">
    <property type="term" value="C:nucleoplasm"/>
    <property type="evidence" value="ECO:0000314"/>
    <property type="project" value="FlyBase"/>
</dbReference>
<dbReference type="GO" id="GO:0005634">
    <property type="term" value="C:nucleus"/>
    <property type="evidence" value="ECO:0000314"/>
    <property type="project" value="UniProtKB"/>
</dbReference>
<dbReference type="GO" id="GO:0090571">
    <property type="term" value="C:RNA polymerase II transcription repressor complex"/>
    <property type="evidence" value="ECO:0000353"/>
    <property type="project" value="FlyBase"/>
</dbReference>
<dbReference type="GO" id="GO:0017053">
    <property type="term" value="C:transcription repressor complex"/>
    <property type="evidence" value="ECO:0000314"/>
    <property type="project" value="UniProtKB"/>
</dbReference>
<dbReference type="GO" id="GO:0140463">
    <property type="term" value="F:chromatin-protein adaptor activity"/>
    <property type="evidence" value="ECO:0000314"/>
    <property type="project" value="FlyBase"/>
</dbReference>
<dbReference type="GO" id="GO:0003723">
    <property type="term" value="F:RNA binding"/>
    <property type="evidence" value="ECO:0000318"/>
    <property type="project" value="GO_Central"/>
</dbReference>
<dbReference type="GO" id="GO:0003727">
    <property type="term" value="F:single-stranded RNA binding"/>
    <property type="evidence" value="ECO:0000314"/>
    <property type="project" value="UniProtKB"/>
</dbReference>
<dbReference type="GO" id="GO:0003714">
    <property type="term" value="F:transcription corepressor activity"/>
    <property type="evidence" value="ECO:0000315"/>
    <property type="project" value="FlyBase"/>
</dbReference>
<dbReference type="GO" id="GO:0016973">
    <property type="term" value="P:poly(A)+ mRNA export from nucleus"/>
    <property type="evidence" value="ECO:0000318"/>
    <property type="project" value="GO_Central"/>
</dbReference>
<dbReference type="GO" id="GO:1990139">
    <property type="term" value="P:protein localization to nuclear periphery"/>
    <property type="evidence" value="ECO:0000315"/>
    <property type="project" value="FlyBase"/>
</dbReference>
<dbReference type="GO" id="GO:0141006">
    <property type="term" value="P:transposable element silencing by piRNA-mediated heterochromatin formation"/>
    <property type="evidence" value="ECO:0000315"/>
    <property type="project" value="UniProtKB"/>
</dbReference>
<dbReference type="FunFam" id="3.10.450.50:FF:000038">
    <property type="entry name" value="Nuclear RNA export factor 2"/>
    <property type="match status" value="1"/>
</dbReference>
<dbReference type="FunFam" id="3.80.10.10:FF:000816">
    <property type="entry name" value="Nuclear RNA export factor 2"/>
    <property type="match status" value="1"/>
</dbReference>
<dbReference type="Gene3D" id="3.10.450.50">
    <property type="match status" value="1"/>
</dbReference>
<dbReference type="Gene3D" id="1.10.8.10">
    <property type="entry name" value="DNA helicase RuvA subunit, C-terminal domain"/>
    <property type="match status" value="1"/>
</dbReference>
<dbReference type="Gene3D" id="3.80.10.10">
    <property type="entry name" value="Ribonuclease Inhibitor"/>
    <property type="match status" value="2"/>
</dbReference>
<dbReference type="InterPro" id="IPR001611">
    <property type="entry name" value="Leu-rich_rpt"/>
</dbReference>
<dbReference type="InterPro" id="IPR032675">
    <property type="entry name" value="LRR_dom_sf"/>
</dbReference>
<dbReference type="InterPro" id="IPR032710">
    <property type="entry name" value="NTF2-like_dom_sf"/>
</dbReference>
<dbReference type="InterPro" id="IPR002075">
    <property type="entry name" value="NTF2_dom"/>
</dbReference>
<dbReference type="InterPro" id="IPR018222">
    <property type="entry name" value="Nuclear_transport_factor_2_euk"/>
</dbReference>
<dbReference type="InterPro" id="IPR030217">
    <property type="entry name" value="NXF_fam"/>
</dbReference>
<dbReference type="InterPro" id="IPR005637">
    <property type="entry name" value="TAP_C_dom"/>
</dbReference>
<dbReference type="InterPro" id="IPR009060">
    <property type="entry name" value="UBA-like_sf"/>
</dbReference>
<dbReference type="PANTHER" id="PTHR10662">
    <property type="entry name" value="NUCLEAR RNA EXPORT FACTOR"/>
    <property type="match status" value="1"/>
</dbReference>
<dbReference type="PANTHER" id="PTHR10662:SF22">
    <property type="entry name" value="NUCLEAR RNA EXPORT FACTOR 1"/>
    <property type="match status" value="1"/>
</dbReference>
<dbReference type="Pfam" id="PF24048">
    <property type="entry name" value="LRR_NXF1-5"/>
    <property type="match status" value="1"/>
</dbReference>
<dbReference type="Pfam" id="PF22602">
    <property type="entry name" value="NXF_NTF2"/>
    <property type="match status" value="1"/>
</dbReference>
<dbReference type="Pfam" id="PF03943">
    <property type="entry name" value="TAP_C"/>
    <property type="match status" value="1"/>
</dbReference>
<dbReference type="SMART" id="SM00804">
    <property type="entry name" value="TAP_C"/>
    <property type="match status" value="1"/>
</dbReference>
<dbReference type="SUPFAM" id="SSF52058">
    <property type="entry name" value="L domain-like"/>
    <property type="match status" value="2"/>
</dbReference>
<dbReference type="SUPFAM" id="SSF54427">
    <property type="entry name" value="NTF2-like"/>
    <property type="match status" value="1"/>
</dbReference>
<dbReference type="SUPFAM" id="SSF46934">
    <property type="entry name" value="UBA-like"/>
    <property type="match status" value="1"/>
</dbReference>
<dbReference type="PROSITE" id="PS51450">
    <property type="entry name" value="LRR"/>
    <property type="match status" value="5"/>
</dbReference>
<dbReference type="PROSITE" id="PS50177">
    <property type="entry name" value="NTF2_DOMAIN"/>
    <property type="match status" value="1"/>
</dbReference>
<dbReference type="PROSITE" id="PS51281">
    <property type="entry name" value="TAP_C"/>
    <property type="match status" value="1"/>
</dbReference>
<keyword id="KW-0002">3D-structure</keyword>
<keyword id="KW-0963">Cytoplasm</keyword>
<keyword id="KW-0433">Leucine-rich repeat</keyword>
<keyword id="KW-0509">mRNA transport</keyword>
<keyword id="KW-0539">Nucleus</keyword>
<keyword id="KW-1185">Reference proteome</keyword>
<keyword id="KW-0677">Repeat</keyword>
<keyword id="KW-0694">RNA-binding</keyword>
<keyword id="KW-0813">Transport</keyword>
<proteinExistence type="evidence at protein level"/>
<gene>
    <name type="primary">nxf2</name>
    <name type="ORF">CG4118</name>
</gene>
<name>NXF2_DROME</name>
<feature type="chain" id="PRO_0000220539" description="Nuclear RNA export factor 2">
    <location>
        <begin position="1"/>
        <end position="841"/>
    </location>
</feature>
<feature type="repeat" description="LRR 1">
    <location>
        <begin position="200"/>
        <end position="221"/>
    </location>
</feature>
<feature type="repeat" description="LRR 2">
    <location>
        <begin position="224"/>
        <end position="245"/>
    </location>
</feature>
<feature type="repeat" description="LRR 3">
    <location>
        <begin position="249"/>
        <end position="270"/>
    </location>
</feature>
<feature type="domain" description="RRM">
    <location>
        <begin position="325"/>
        <end position="408"/>
    </location>
</feature>
<feature type="repeat" description="LRR 4">
    <location>
        <begin position="475"/>
        <end position="496"/>
    </location>
</feature>
<feature type="repeat" description="LRR 5">
    <location>
        <begin position="500"/>
        <end position="521"/>
    </location>
</feature>
<feature type="repeat" description="LRR 6">
    <location>
        <begin position="524"/>
        <end position="545"/>
    </location>
</feature>
<feature type="domain" description="NTF2" evidence="1">
    <location>
        <begin position="585"/>
        <end position="758"/>
    </location>
</feature>
<feature type="domain" description="TAP-C" evidence="4 5 6 7">
    <location>
        <begin position="788"/>
        <end position="841"/>
    </location>
</feature>
<feature type="region of interest" description="RNA-binding unit probably involved in Piwi-dependent recruitment and single-stranded RNA-PPNP complex formation" evidence="5 6 7">
    <location>
        <begin position="1"/>
        <end position="285"/>
    </location>
</feature>
<feature type="region of interest" description="Necessary for silencing function" evidence="7">
    <location>
        <begin position="286"/>
        <end position="553"/>
    </location>
</feature>
<feature type="mutagenesis site" description="Abolishes RNA-binding; when associated with 236-A--A-240." evidence="6">
    <original>R</original>
    <variation>A</variation>
    <location>
        <position position="210"/>
    </location>
</feature>
<feature type="mutagenesis site" description="Abolishes RNA-binding; when associated with A-210." evidence="6">
    <original>KSAER</original>
    <variation>ASAEA</variation>
    <location>
        <begin position="236"/>
        <end position="240"/>
    </location>
</feature>
<feature type="mutagenesis site" description="Retains localization to the nucleus and interaction with Panx but reduces interaction with Nxt1. Increases transposon expression after loss of gene." evidence="4">
    <original>IANE</original>
    <variation>GGAA</variation>
    <location>
        <begin position="751"/>
        <end position="754"/>
    </location>
</feature>
<feature type="mutagenesis site" description="Retains localization to the nucleus and interaction with Panx but reduces interaction with Nxt1. Increases transposon expression after loss of gene." evidence="4">
    <original>ERL</original>
    <variation>AGA</variation>
    <location>
        <begin position="754"/>
        <end position="756"/>
    </location>
</feature>
<feature type="mutagenesis site" description="Retains localization to the nucleus and interaction with Panx. Increases transposon expression after loss of gene." evidence="4">
    <original>RLHI</original>
    <variation>AGVK</variation>
    <location>
        <begin position="755"/>
        <end position="758"/>
    </location>
</feature>
<feature type="mutagenesis site" description="Retains localization to the nucleus and interaction with Panx. Reduces transposon expression after loss of gene." evidence="4">
    <original>R</original>
    <variation>G</variation>
    <location>
        <position position="755"/>
    </location>
</feature>
<feature type="mutagenesis site" description="Reduces binding to Panx, increases cytoplasmic localization and increases transposon expression after loss of gene." evidence="4">
    <original>IVEE</original>
    <variation>KRGG</variation>
    <location>
        <begin position="811"/>
        <end position="814"/>
    </location>
</feature>
<feature type="mutagenesis site" description="Reduces binding to Panx." evidence="7">
    <original>L</original>
    <variation>A</variation>
    <location>
        <position position="823"/>
    </location>
</feature>
<feature type="mutagenesis site" description="Reduces binding to Panx." evidence="7">
    <original>FI</original>
    <variation>AA</variation>
    <location>
        <begin position="826"/>
        <end position="827"/>
    </location>
</feature>
<feature type="mutagenesis site" description="Reduces binding to Panx, increases cytoplasmic localization and increases transposon expression after loss of gene." evidence="4">
    <original>IP</original>
    <variation>NA</variation>
    <location>
        <begin position="835"/>
        <end position="836"/>
    </location>
</feature>
<feature type="mutagenesis site" description="Reduces binding to Panx." evidence="7">
    <original>D</original>
    <variation>A</variation>
    <location>
        <position position="837"/>
    </location>
</feature>
<feature type="strand" evidence="12">
    <location>
        <begin position="576"/>
        <end position="578"/>
    </location>
</feature>
<feature type="helix" evidence="12">
    <location>
        <begin position="583"/>
        <end position="598"/>
    </location>
</feature>
<feature type="helix" evidence="12">
    <location>
        <begin position="600"/>
        <end position="609"/>
    </location>
</feature>
<feature type="strand" evidence="12">
    <location>
        <begin position="615"/>
        <end position="620"/>
    </location>
</feature>
<feature type="helix" evidence="12">
    <location>
        <begin position="630"/>
        <end position="641"/>
    </location>
</feature>
<feature type="helix" evidence="12">
    <location>
        <begin position="652"/>
        <end position="656"/>
    </location>
</feature>
<feature type="strand" evidence="12">
    <location>
        <begin position="660"/>
        <end position="662"/>
    </location>
</feature>
<feature type="helix" evidence="12">
    <location>
        <begin position="663"/>
        <end position="670"/>
    </location>
</feature>
<feature type="strand" evidence="12">
    <location>
        <begin position="675"/>
        <end position="678"/>
    </location>
</feature>
<feature type="helix" evidence="12">
    <location>
        <begin position="680"/>
        <end position="682"/>
    </location>
</feature>
<feature type="strand" evidence="12">
    <location>
        <begin position="684"/>
        <end position="706"/>
    </location>
</feature>
<feature type="strand" evidence="12">
    <location>
        <begin position="723"/>
        <end position="737"/>
    </location>
</feature>
<feature type="strand" evidence="12">
    <location>
        <begin position="747"/>
        <end position="759"/>
    </location>
</feature>
<feature type="helix" evidence="12">
    <location>
        <begin position="763"/>
        <end position="768"/>
    </location>
</feature>
<feature type="helix" evidence="11">
    <location>
        <begin position="789"/>
        <end position="801"/>
    </location>
</feature>
<feature type="helix" evidence="11">
    <location>
        <begin position="805"/>
        <end position="814"/>
    </location>
</feature>
<feature type="turn" evidence="11">
    <location>
        <begin position="815"/>
        <end position="817"/>
    </location>
</feature>
<feature type="helix" evidence="11">
    <location>
        <begin position="819"/>
        <end position="831"/>
    </location>
</feature>
<feature type="helix" evidence="11">
    <location>
        <begin position="837"/>
        <end position="839"/>
    </location>
</feature>
<reference key="1">
    <citation type="journal article" date="2001" name="RNA">
        <title>NXF1/p15 heterodimers are essential for mRNA nuclear export in Drosophila.</title>
        <authorList>
            <person name="Herold A."/>
            <person name="Klymenko T."/>
            <person name="Izaurralde E."/>
        </authorList>
    </citation>
    <scope>NUCLEOTIDE SEQUENCE [MRNA]</scope>
    <scope>FUNCTION</scope>
    <scope>SUBCELLULAR LOCATION</scope>
    <scope>TISSUE SPECIFICITY</scope>
    <scope>DEVELOPMENTAL STAGE</scope>
    <source>
        <tissue>Embryo</tissue>
    </source>
</reference>
<reference key="2">
    <citation type="journal article" date="2000" name="Science">
        <title>The genome sequence of Drosophila melanogaster.</title>
        <authorList>
            <person name="Adams M.D."/>
            <person name="Celniker S.E."/>
            <person name="Holt R.A."/>
            <person name="Evans C.A."/>
            <person name="Gocayne J.D."/>
            <person name="Amanatides P.G."/>
            <person name="Scherer S.E."/>
            <person name="Li P.W."/>
            <person name="Hoskins R.A."/>
            <person name="Galle R.F."/>
            <person name="George R.A."/>
            <person name="Lewis S.E."/>
            <person name="Richards S."/>
            <person name="Ashburner M."/>
            <person name="Henderson S.N."/>
            <person name="Sutton G.G."/>
            <person name="Wortman J.R."/>
            <person name="Yandell M.D."/>
            <person name="Zhang Q."/>
            <person name="Chen L.X."/>
            <person name="Brandon R.C."/>
            <person name="Rogers Y.-H.C."/>
            <person name="Blazej R.G."/>
            <person name="Champe M."/>
            <person name="Pfeiffer B.D."/>
            <person name="Wan K.H."/>
            <person name="Doyle C."/>
            <person name="Baxter E.G."/>
            <person name="Helt G."/>
            <person name="Nelson C.R."/>
            <person name="Miklos G.L.G."/>
            <person name="Abril J.F."/>
            <person name="Agbayani A."/>
            <person name="An H.-J."/>
            <person name="Andrews-Pfannkoch C."/>
            <person name="Baldwin D."/>
            <person name="Ballew R.M."/>
            <person name="Basu A."/>
            <person name="Baxendale J."/>
            <person name="Bayraktaroglu L."/>
            <person name="Beasley E.M."/>
            <person name="Beeson K.Y."/>
            <person name="Benos P.V."/>
            <person name="Berman B.P."/>
            <person name="Bhandari D."/>
            <person name="Bolshakov S."/>
            <person name="Borkova D."/>
            <person name="Botchan M.R."/>
            <person name="Bouck J."/>
            <person name="Brokstein P."/>
            <person name="Brottier P."/>
            <person name="Burtis K.C."/>
            <person name="Busam D.A."/>
            <person name="Butler H."/>
            <person name="Cadieu E."/>
            <person name="Center A."/>
            <person name="Chandra I."/>
            <person name="Cherry J.M."/>
            <person name="Cawley S."/>
            <person name="Dahlke C."/>
            <person name="Davenport L.B."/>
            <person name="Davies P."/>
            <person name="de Pablos B."/>
            <person name="Delcher A."/>
            <person name="Deng Z."/>
            <person name="Mays A.D."/>
            <person name="Dew I."/>
            <person name="Dietz S.M."/>
            <person name="Dodson K."/>
            <person name="Doup L.E."/>
            <person name="Downes M."/>
            <person name="Dugan-Rocha S."/>
            <person name="Dunkov B.C."/>
            <person name="Dunn P."/>
            <person name="Durbin K.J."/>
            <person name="Evangelista C.C."/>
            <person name="Ferraz C."/>
            <person name="Ferriera S."/>
            <person name="Fleischmann W."/>
            <person name="Fosler C."/>
            <person name="Gabrielian A.E."/>
            <person name="Garg N.S."/>
            <person name="Gelbart W.M."/>
            <person name="Glasser K."/>
            <person name="Glodek A."/>
            <person name="Gong F."/>
            <person name="Gorrell J.H."/>
            <person name="Gu Z."/>
            <person name="Guan P."/>
            <person name="Harris M."/>
            <person name="Harris N.L."/>
            <person name="Harvey D.A."/>
            <person name="Heiman T.J."/>
            <person name="Hernandez J.R."/>
            <person name="Houck J."/>
            <person name="Hostin D."/>
            <person name="Houston K.A."/>
            <person name="Howland T.J."/>
            <person name="Wei M.-H."/>
            <person name="Ibegwam C."/>
            <person name="Jalali M."/>
            <person name="Kalush F."/>
            <person name="Karpen G.H."/>
            <person name="Ke Z."/>
            <person name="Kennison J.A."/>
            <person name="Ketchum K.A."/>
            <person name="Kimmel B.E."/>
            <person name="Kodira C.D."/>
            <person name="Kraft C.L."/>
            <person name="Kravitz S."/>
            <person name="Kulp D."/>
            <person name="Lai Z."/>
            <person name="Lasko P."/>
            <person name="Lei Y."/>
            <person name="Levitsky A.A."/>
            <person name="Li J.H."/>
            <person name="Li Z."/>
            <person name="Liang Y."/>
            <person name="Lin X."/>
            <person name="Liu X."/>
            <person name="Mattei B."/>
            <person name="McIntosh T.C."/>
            <person name="McLeod M.P."/>
            <person name="McPherson D."/>
            <person name="Merkulov G."/>
            <person name="Milshina N.V."/>
            <person name="Mobarry C."/>
            <person name="Morris J."/>
            <person name="Moshrefi A."/>
            <person name="Mount S.M."/>
            <person name="Moy M."/>
            <person name="Murphy B."/>
            <person name="Murphy L."/>
            <person name="Muzny D.M."/>
            <person name="Nelson D.L."/>
            <person name="Nelson D.R."/>
            <person name="Nelson K.A."/>
            <person name="Nixon K."/>
            <person name="Nusskern D.R."/>
            <person name="Pacleb J.M."/>
            <person name="Palazzolo M."/>
            <person name="Pittman G.S."/>
            <person name="Pan S."/>
            <person name="Pollard J."/>
            <person name="Puri V."/>
            <person name="Reese M.G."/>
            <person name="Reinert K."/>
            <person name="Remington K."/>
            <person name="Saunders R.D.C."/>
            <person name="Scheeler F."/>
            <person name="Shen H."/>
            <person name="Shue B.C."/>
            <person name="Siden-Kiamos I."/>
            <person name="Simpson M."/>
            <person name="Skupski M.P."/>
            <person name="Smith T.J."/>
            <person name="Spier E."/>
            <person name="Spradling A.C."/>
            <person name="Stapleton M."/>
            <person name="Strong R."/>
            <person name="Sun E."/>
            <person name="Svirskas R."/>
            <person name="Tector C."/>
            <person name="Turner R."/>
            <person name="Venter E."/>
            <person name="Wang A.H."/>
            <person name="Wang X."/>
            <person name="Wang Z.-Y."/>
            <person name="Wassarman D.A."/>
            <person name="Weinstock G.M."/>
            <person name="Weissenbach J."/>
            <person name="Williams S.M."/>
            <person name="Woodage T."/>
            <person name="Worley K.C."/>
            <person name="Wu D."/>
            <person name="Yang S."/>
            <person name="Yao Q.A."/>
            <person name="Ye J."/>
            <person name="Yeh R.-F."/>
            <person name="Zaveri J.S."/>
            <person name="Zhan M."/>
            <person name="Zhang G."/>
            <person name="Zhao Q."/>
            <person name="Zheng L."/>
            <person name="Zheng X.H."/>
            <person name="Zhong F.N."/>
            <person name="Zhong W."/>
            <person name="Zhou X."/>
            <person name="Zhu S.C."/>
            <person name="Zhu X."/>
            <person name="Smith H.O."/>
            <person name="Gibbs R.A."/>
            <person name="Myers E.W."/>
            <person name="Rubin G.M."/>
            <person name="Venter J.C."/>
        </authorList>
    </citation>
    <scope>NUCLEOTIDE SEQUENCE [LARGE SCALE GENOMIC DNA]</scope>
    <source>
        <strain>Berkeley</strain>
    </source>
</reference>
<reference key="3">
    <citation type="journal article" date="2002" name="Genome Biol.">
        <title>Annotation of the Drosophila melanogaster euchromatic genome: a systematic review.</title>
        <authorList>
            <person name="Misra S."/>
            <person name="Crosby M.A."/>
            <person name="Mungall C.J."/>
            <person name="Matthews B.B."/>
            <person name="Campbell K.S."/>
            <person name="Hradecky P."/>
            <person name="Huang Y."/>
            <person name="Kaminker J.S."/>
            <person name="Millburn G.H."/>
            <person name="Prochnik S.E."/>
            <person name="Smith C.D."/>
            <person name="Tupy J.L."/>
            <person name="Whitfield E.J."/>
            <person name="Bayraktaroglu L."/>
            <person name="Berman B.P."/>
            <person name="Bettencourt B.R."/>
            <person name="Celniker S.E."/>
            <person name="de Grey A.D.N.J."/>
            <person name="Drysdale R.A."/>
            <person name="Harris N.L."/>
            <person name="Richter J."/>
            <person name="Russo S."/>
            <person name="Schroeder A.J."/>
            <person name="Shu S.Q."/>
            <person name="Stapleton M."/>
            <person name="Yamada C."/>
            <person name="Ashburner M."/>
            <person name="Gelbart W.M."/>
            <person name="Rubin G.M."/>
            <person name="Lewis S.E."/>
        </authorList>
    </citation>
    <scope>GENOME REANNOTATION</scope>
    <source>
        <strain>Berkeley</strain>
    </source>
</reference>
<reference key="4">
    <citation type="journal article" date="2002" name="Genome Biol.">
        <title>A Drosophila full-length cDNA resource.</title>
        <authorList>
            <person name="Stapleton M."/>
            <person name="Carlson J.W."/>
            <person name="Brokstein P."/>
            <person name="Yu C."/>
            <person name="Champe M."/>
            <person name="George R.A."/>
            <person name="Guarin H."/>
            <person name="Kronmiller B."/>
            <person name="Pacleb J.M."/>
            <person name="Park S."/>
            <person name="Wan K.H."/>
            <person name="Rubin G.M."/>
            <person name="Celniker S.E."/>
        </authorList>
    </citation>
    <scope>NUCLEOTIDE SEQUENCE [LARGE SCALE MRNA]</scope>
    <source>
        <strain>Berkeley</strain>
        <tissue>Embryo</tissue>
    </source>
</reference>
<reference key="5">
    <citation type="journal article" date="2019" name="Elife">
        <title>piRNA-guided co-transcriptional silencing coopts nuclear export factors.</title>
        <authorList>
            <person name="Fabry M.H."/>
            <person name="Ciabrelli F."/>
            <person name="Munafo M."/>
            <person name="Eastwood E.L."/>
            <person name="Kneuss E."/>
            <person name="Falciatori I."/>
            <person name="Falconio F.A."/>
            <person name="Hannon G.J."/>
            <person name="Czech B."/>
        </authorList>
    </citation>
    <scope>IDENTIFICATION BY MASS SPECTROMETRY</scope>
    <scope>FUNCTION</scope>
    <scope>IDENTIFICATION IN A COMPLEX WITH PANX AND NXT1</scope>
    <scope>INTERACTION WITH PANX</scope>
    <scope>SUBCELLULAR LOCATION</scope>
    <scope>TISSUE SPECIFICITY</scope>
    <scope>DOMAIN</scope>
    <scope>DISRUPTION PHENOTYPE</scope>
    <scope>MUTAGENESIS OF 751-ILE--GLU-754; 754-GLU--LEU-756; 755-ARG--ILE-758; ARG-755; 811-ILE--GLU-814 AND 835-ILE-PRO-836</scope>
</reference>
<reference key="6">
    <citation type="journal article" date="2019" name="EMBO J.">
        <title>Nuclear RNA export factor variant initiates piRNA-guided co-transcriptional silencing.</title>
        <authorList>
            <person name="Murano K."/>
            <person name="Iwasaki Y.W."/>
            <person name="Ishizu H."/>
            <person name="Mashiko A."/>
            <person name="Shibuya A."/>
            <person name="Kondo S."/>
            <person name="Adachi S."/>
            <person name="Suzuki S."/>
            <person name="Saito K."/>
            <person name="Natsume T."/>
            <person name="Siomi M.C."/>
            <person name="Siomi H."/>
        </authorList>
    </citation>
    <scope>IDENTIFICATION BY MASS SPECTROMETRY</scope>
    <scope>FUNCTION</scope>
    <scope>IDENTIFICATION IN A COMPLEX WITH PANX; NXT1 AND PIWI</scope>
    <scope>INTERACTION WITH NXT1 AND PANX</scope>
    <scope>SUBCELLULAR LOCATION</scope>
    <scope>TISSUE SPECIFICITY</scope>
    <scope>DOMAIN</scope>
    <scope>DISRUPTION PHENOTYPE</scope>
</reference>
<reference key="7">
    <citation type="journal article" date="2019" name="Nat. Cell Biol.">
        <title>A Pandas complex adapted for piRNA-guided transcriptional silencing and heterochromatin formation.</title>
        <authorList>
            <person name="Zhao K."/>
            <person name="Cheng S."/>
            <person name="Miao N."/>
            <person name="Xu P."/>
            <person name="Lu X."/>
            <person name="Zhang Y."/>
            <person name="Wang M."/>
            <person name="Ouyang X."/>
            <person name="Yuan X."/>
            <person name="Liu W."/>
            <person name="Lu X."/>
            <person name="Zhou P."/>
            <person name="Gu J."/>
            <person name="Zhang Y."/>
            <person name="Qiu D."/>
            <person name="Jin Z."/>
            <person name="Su C."/>
            <person name="Peng C."/>
            <person name="Wang J.H."/>
            <person name="Dong M.Q."/>
            <person name="Wan Y."/>
            <person name="Ma J."/>
            <person name="Cheng H."/>
            <person name="Huang Y."/>
            <person name="Yu Y."/>
        </authorList>
    </citation>
    <scope>IDENTIFICATION BY MASS SPECTROMETRY</scope>
    <scope>FUNCTION</scope>
    <scope>IDENTIFICATION IN A COMPLEX WITH PANX AND NXT1</scope>
    <scope>INTERACTION WITH PANX AND NXF1</scope>
    <scope>TISSUE SPECIFICITY</scope>
    <scope>DOMAIN</scope>
    <scope>DISRUPTION PHENOTYPE</scope>
    <scope>MUTAGENESIS OF LEU-823; ASP-837 AND 826-PHE-LEU-827</scope>
</reference>
<reference evidence="9 10" key="8">
    <citation type="journal article" date="2019" name="Nat. Struct. Mol. Biol.">
        <title>The nascent RNA binding complex SFiNX licenses piRNA-guided heterochromatin formation.</title>
        <authorList>
            <person name="Batki J."/>
            <person name="Schnabl J."/>
            <person name="Wang J."/>
            <person name="Handler D."/>
            <person name="Andreev V.I."/>
            <person name="Stieger C.E."/>
            <person name="Novatchkova M."/>
            <person name="Lampersberger L."/>
            <person name="Kauneckaite K."/>
            <person name="Xie W."/>
            <person name="Mechtler K."/>
            <person name="Patel D.J."/>
            <person name="Brennecke J."/>
        </authorList>
    </citation>
    <scope>X-RAY CRYSTALLOGRAPHY (2.00 ANGSTROMS) OF 781-841 IN COMPLEX WITH PANX AND NXT1</scope>
    <scope>IDENTIFICATION BY MASS SPECTROMETRY</scope>
    <scope>FUNCTION</scope>
    <scope>IDENTIFICATION IN A COMPLEX WITH PANX; NXT1 AND PIWI</scope>
    <scope>SUBCELLULAR LOCATION</scope>
    <scope>TISSUE SPECIFICITY</scope>
    <scope>DOMAIN</scope>
    <scope>DISRUPTION PHENOTYPE</scope>
    <scope>MUTAGENESIS OF ARG-210 AND 236-LYS--ARG-240</scope>
</reference>
<sequence>MPNQMRVLDFGDGSVPIQLDYPDSKIFSKCSSYGDRVPGTHWNEITVHHKGRLEYSPNPEQIILDALYQAIDGADFFPVFYQRGKNMDTMLVRNCKAAIDKLFKQRLSINLKGGASIPISIQLGVAQYQRHQITPTFHIARVVTRLMKQLIQRDGVDGLLNLDNFGSHPEFKNLVVSLGNPSILMNVCQVIHNDDNERFRLNGFILSNNRIRDIRPLTLLANVDYALLDLRGNKIKSAERLCRALEQFRARELLLENNPIVKISNFPANIKSLESNFELVDGKPFNMLHKIFSPLDVEIDLEVDGARIDTNNMWKLPEFENSQHWHAFMIPDPSHEFNQEVFFDFFFIRLDPTLSNFYPCYYKYINTEHVFLVRNCFDQIAHLVNNCNLEMTIPTGDRIFRYYLRMNVSTVKQHHVDPEECIQKAVSQCYVAQNRMLNLERFHSRECLKDVMVSLSSPKILTYVLSVASRKFMTTCSEIRLCHNKVLVLDGAHVLGMMGCLRAVDLSHNWVQDLSSIHSLGNLPLKSLVLHGNKLCRNYRLPSEYVRAVKEVFPQLTTLDGVDLQTNPGQSLQKNFLCDTGAYELVGAFLENYLREFENDEFRHNLYKYYSENSIFTLTCNYNVVQNHQTPKILQRLSKYNRHARNLRNKDYSKASDGVFFGCTYIVEILLQLPRVTHDFHSLQTDVMHYNGKGAVIYVAGLLRDEPPSTRNGHGSKTDIGGVLLGFSRQFVVTFDEANLGLGKRARRLKIANERLHITNPSKTAIRNAFSVNFPDPSERQAEEDSLDVKDHKLLLFQEVTGLISTWVTSIVEEADWDFERALKLFIQKNADHEIPDLAFA</sequence>
<protein>
    <recommendedName>
        <fullName>Nuclear RNA export factor 2</fullName>
    </recommendedName>
</protein>
<organism>
    <name type="scientific">Drosophila melanogaster</name>
    <name type="common">Fruit fly</name>
    <dbReference type="NCBI Taxonomy" id="7227"/>
    <lineage>
        <taxon>Eukaryota</taxon>
        <taxon>Metazoa</taxon>
        <taxon>Ecdysozoa</taxon>
        <taxon>Arthropoda</taxon>
        <taxon>Hexapoda</taxon>
        <taxon>Insecta</taxon>
        <taxon>Pterygota</taxon>
        <taxon>Neoptera</taxon>
        <taxon>Endopterygota</taxon>
        <taxon>Diptera</taxon>
        <taxon>Brachycera</taxon>
        <taxon>Muscomorpha</taxon>
        <taxon>Ephydroidea</taxon>
        <taxon>Drosophilidae</taxon>
        <taxon>Drosophila</taxon>
        <taxon>Sophophora</taxon>
    </lineage>
</organism>
<comment type="function">
    <text evidence="3 4 5 6 7">May be involved in the export of mRNA from the nucleus to the cytoplasm (PubMed:11780633). In the ovaries, forms a complex with nxf2, piwi and Nxt1 which acts as effectors of cotranscriptional transposon silencing (PubMed:31219034, PubMed:31368590, PubMed:31384064, PubMed:31570835). On recruitment to a target transcript, interacts with single stranded RNA, thereby anchoring the complex via the nascent target transcript to chromatin and allowing Panx to recruit silencing effectors to establishing repressive heterochromatin at transposon loci (PubMed:31368590, PubMed:31384064, PubMed:31570835). Does not affect piRNA biogenesis (PubMed:31384064). The interaction with Panx stabilizes the nuclear protein complex (PubMed:31384064). Does not bind nucleoporins, but regulates sbr/Nxf1 binding to nucleoporins and, indirectly, transposon exports (PubMed:31384064, PubMed:31570835).</text>
</comment>
<comment type="subunit">
    <text evidence="4 5 6 7">In the ovaries, part of a complex composed of at least Panx, nxf2, piwi and Nxt1 (PubMed:31219034, PubMed:31368590, PubMed:31384064, PubMed:31570835). The complex is knowns as Panx-induced cotranscriptional silencing (PICTS) complex, Panx-nxf2-dependent TAP/p15 silencing (Pandas complex), SFiNX (silencing factor interacting nuclear export variant) or piwi-Panx-nxf2-p15 (PPNP) complex (PubMed:31219034, PubMed:31368590, PubMed:31384064, PubMed:31570835). Interacts (via TAP-C domain) with Panx (via NIR region); the interaction is direct (PubMed:31219034, PubMed:31368590, PubMed:31570835). Interacts (via NTF2 domain) with Nxt1; the interaction is direct and prevents Nxt1 binding to nucleoporins (PubMed:31368590). Interacts with sbr/Nxf1 (PubMed:31570835).</text>
</comment>
<comment type="subcellular location">
    <subcellularLocation>
        <location evidence="2 3 4">Cytoplasm</location>
    </subcellularLocation>
    <subcellularLocation>
        <location evidence="4 5 6">Nucleus</location>
    </subcellularLocation>
    <subcellularLocation>
        <location evidence="3">Nucleus</location>
        <location evidence="3">Nucleoplasm</location>
    </subcellularLocation>
    <text evidence="3 4 6">Localized in both the nucleoplasm and the cytoplasm (PubMed:11780633). Not detected at the nuclear rim (PubMed:11780633). Nuclear localization depends on interaction with Panx (PubMed:31219034, PubMed:31384064).</text>
</comment>
<comment type="tissue specificity">
    <text evidence="3 4 5 6 7">Expressed in female gonads (at protein level) (PubMed:31219034, PubMed:31368590, PubMed:31384064, PubMed:31570835). Expressed ubiquitously (PubMed:11780633).</text>
</comment>
<comment type="developmental stage">
    <text evidence="3">Expressed throughout embryonic development.</text>
</comment>
<comment type="domain">
    <text>The RNA-binding domain is a non-canonical RNP-type domain.</text>
</comment>
<comment type="domain">
    <text evidence="4 5 6 7">The TAP-C domain (also known as UBA domain) mediates the interaction with Panx.</text>
</comment>
<comment type="disruption phenotype">
    <text evidence="4 5 6 7">Results in sterility where fewer eggs are laid and none reach larval stage (PubMed:31219034, PubMed:31384064). Increases transposon expression (PubMed:31219034, PubMed:31384064). RNAi-mediated knockdown in the germline does not affect ovary morphology but results in severe fertility defects where eggs are laied but do not hatch (PubMed:31368590). RNAi-mediated knockdown in the germline increases transposon expression and impairs Panx localization in nurse cells by reducing its stability (PubMed:31219034, PubMed:31368590, PubMed:31384064, PubMed:31570835).</text>
</comment>
<comment type="similarity">
    <text evidence="8">Belongs to the NXF family.</text>
</comment>
<evidence type="ECO:0000255" key="1">
    <source>
        <dbReference type="PROSITE-ProRule" id="PRU00137"/>
    </source>
</evidence>
<evidence type="ECO:0000255" key="2">
    <source>
        <dbReference type="PROSITE-ProRule" id="PRU00611"/>
    </source>
</evidence>
<evidence type="ECO:0000269" key="3">
    <source>
    </source>
</evidence>
<evidence type="ECO:0000269" key="4">
    <source>
    </source>
</evidence>
<evidence type="ECO:0000269" key="5">
    <source>
    </source>
</evidence>
<evidence type="ECO:0000269" key="6">
    <source>
    </source>
</evidence>
<evidence type="ECO:0000269" key="7">
    <source>
    </source>
</evidence>
<evidence type="ECO:0000305" key="8"/>
<evidence type="ECO:0007744" key="9">
    <source>
        <dbReference type="PDB" id="6MRK"/>
    </source>
</evidence>
<evidence type="ECO:0007744" key="10">
    <source>
        <dbReference type="PDB" id="6OPF"/>
    </source>
</evidence>
<evidence type="ECO:0007829" key="11">
    <source>
        <dbReference type="PDB" id="6IEW"/>
    </source>
</evidence>
<evidence type="ECO:0007829" key="12">
    <source>
        <dbReference type="PDB" id="6MRK"/>
    </source>
</evidence>
<accession>Q9VV73</accession>
<accession>Q0E8E0</accession>